<organism>
    <name type="scientific">Zunongwangia profunda (strain DSM 18752 / CCTCC AB 206139 / SM-A87)</name>
    <name type="common">Wangia profunda</name>
    <dbReference type="NCBI Taxonomy" id="655815"/>
    <lineage>
        <taxon>Bacteria</taxon>
        <taxon>Pseudomonadati</taxon>
        <taxon>Bacteroidota</taxon>
        <taxon>Flavobacteriia</taxon>
        <taxon>Flavobacteriales</taxon>
        <taxon>Flavobacteriaceae</taxon>
        <taxon>Zunongwangia</taxon>
    </lineage>
</organism>
<name>GGGPS_ZUNPS</name>
<evidence type="ECO:0000255" key="1">
    <source>
        <dbReference type="HAMAP-Rule" id="MF_00112"/>
    </source>
</evidence>
<evidence type="ECO:0000269" key="2">
    <source>
    </source>
</evidence>
<evidence type="ECO:0000312" key="3">
    <source>
        <dbReference type="EMBL" id="ADF54770.1"/>
    </source>
</evidence>
<keyword id="KW-0444">Lipid biosynthesis</keyword>
<keyword id="KW-0443">Lipid metabolism</keyword>
<keyword id="KW-0460">Magnesium</keyword>
<keyword id="KW-0479">Metal-binding</keyword>
<keyword id="KW-0594">Phospholipid biosynthesis</keyword>
<keyword id="KW-1208">Phospholipid metabolism</keyword>
<keyword id="KW-0808">Transferase</keyword>
<accession>D5BCE4</accession>
<protein>
    <recommendedName>
        <fullName evidence="1">Geranylgeranylglyceryl phosphate synthase</fullName>
        <shortName evidence="1">GGGP synthase</shortName>
        <shortName evidence="1">GGGPS</shortName>
        <ecNumber evidence="1 2">2.5.1.41</ecNumber>
    </recommendedName>
    <alternativeName>
        <fullName evidence="1">(S)-3-O-geranylgeranylglyceryl phosphate synthase</fullName>
    </alternativeName>
    <alternativeName>
        <fullName evidence="1">Phosphoglycerol geranylgeranyltransferase</fullName>
    </alternativeName>
</protein>
<reference key="1">
    <citation type="journal article" date="2010" name="BMC Genomics">
        <title>The complete genome of Zunongwangia profunda SM-A87 reveals its adaptation to the deep-sea environment and ecological role in sedimentary organic nitrogen degradation.</title>
        <authorList>
            <person name="Qin Q.L."/>
            <person name="Zhang X.Y."/>
            <person name="Wang X.M."/>
            <person name="Liu G.M."/>
            <person name="Chen X.L."/>
            <person name="Xie B.B."/>
            <person name="Dang H.Y."/>
            <person name="Zhou B.C."/>
            <person name="Yu J."/>
            <person name="Zhang Y.Z."/>
        </authorList>
    </citation>
    <scope>NUCLEOTIDE SEQUENCE [LARGE SCALE GENOMIC DNA]</scope>
    <source>
        <strain>DSM 18752 / CCTCC AB 206139 / SM-A87</strain>
    </source>
</reference>
<reference key="2">
    <citation type="journal article" date="2014" name="Mol. Microbiol.">
        <title>A comprehensive analysis of the geranylgeranylglyceryl phosphate synthase enzyme family identifies novel members and reveals mechanisms of substrate specificity and quaternary structure organization.</title>
        <authorList>
            <person name="Peterhoff D."/>
            <person name="Beer B."/>
            <person name="Rajendran C."/>
            <person name="Kumpula E.P."/>
            <person name="Kapetaniou E."/>
            <person name="Guldan H."/>
            <person name="Wierenga R.K."/>
            <person name="Sterner R."/>
            <person name="Babinger P."/>
        </authorList>
    </citation>
    <scope>FUNCTION</scope>
    <scope>CATALYTIC ACTIVITY</scope>
    <scope>SUBUNIT</scope>
</reference>
<feature type="chain" id="PRO_0000436910" description="Geranylgeranylglyceryl phosphate synthase">
    <location>
        <begin position="1"/>
        <end position="234"/>
    </location>
</feature>
<feature type="binding site" evidence="1">
    <location>
        <position position="24"/>
    </location>
    <ligand>
        <name>Mg(2+)</name>
        <dbReference type="ChEBI" id="CHEBI:18420"/>
    </ligand>
</feature>
<feature type="binding site" evidence="1">
    <location>
        <position position="52"/>
    </location>
    <ligand>
        <name>Mg(2+)</name>
        <dbReference type="ChEBI" id="CHEBI:18420"/>
    </ligand>
</feature>
<feature type="binding site" evidence="1">
    <location>
        <begin position="172"/>
        <end position="178"/>
    </location>
    <ligand>
        <name>sn-glycerol 1-phosphate</name>
        <dbReference type="ChEBI" id="CHEBI:57685"/>
    </ligand>
</feature>
<feature type="binding site" evidence="1">
    <location>
        <begin position="203"/>
        <end position="204"/>
    </location>
    <ligand>
        <name>sn-glycerol 1-phosphate</name>
        <dbReference type="ChEBI" id="CHEBI:57685"/>
    </ligand>
</feature>
<feature type="binding site" evidence="1">
    <location>
        <begin position="225"/>
        <end position="226"/>
    </location>
    <ligand>
        <name>sn-glycerol 1-phosphate</name>
        <dbReference type="ChEBI" id="CHEBI:57685"/>
    </ligand>
</feature>
<comment type="function">
    <text evidence="1 2">Prenyltransferase that catalyzes the transfer of the geranylgeranyl moiety of geranylgeranyl diphosphate (GGPP) to the C3 hydroxyl of sn-glycerol-1-phosphate (G1P).</text>
</comment>
<comment type="catalytic activity">
    <reaction evidence="1 2">
        <text>sn-glycerol 1-phosphate + (2E,6E,10E)-geranylgeranyl diphosphate = sn-3-O-(geranylgeranyl)glycerol 1-phosphate + diphosphate</text>
        <dbReference type="Rhea" id="RHEA:23404"/>
        <dbReference type="ChEBI" id="CHEBI:33019"/>
        <dbReference type="ChEBI" id="CHEBI:57677"/>
        <dbReference type="ChEBI" id="CHEBI:57685"/>
        <dbReference type="ChEBI" id="CHEBI:58756"/>
        <dbReference type="EC" id="2.5.1.41"/>
    </reaction>
</comment>
<comment type="cofactor">
    <cofactor evidence="1">
        <name>Mg(2+)</name>
        <dbReference type="ChEBI" id="CHEBI:18420"/>
    </cofactor>
</comment>
<comment type="subunit">
    <text evidence="2">Homodimer.</text>
</comment>
<comment type="similarity">
    <text evidence="1">Belongs to the GGGP/HepGP synthase family. Group II subfamily.</text>
</comment>
<sequence length="234" mass="25221">MPKILDAIIKASKINKKLLAVLIDPEKFATENYSYFIEKLPEAVTHIFVGGSTATTAQSEVCVDFIKTKTNLPVILFPGDKEQITEKADGILLLSLISGRNPEYLIEQHIKAVPKLLNAGLEIIPTGYLLLDGGNQSAVARVSKTKPIQQDEIELIRNTALAGAMLGKQLVYLEAGSGALIPVSEKVIAEVKRDLNIPLIVGGGIRNATQLKKAYKAGADLVVIGTAFENGEFK</sequence>
<dbReference type="EC" id="2.5.1.41" evidence="1 2"/>
<dbReference type="EMBL" id="CP001650">
    <property type="protein sequence ID" value="ADF54770.1"/>
    <property type="molecule type" value="Genomic_DNA"/>
</dbReference>
<dbReference type="RefSeq" id="WP_013073830.1">
    <property type="nucleotide sequence ID" value="NC_014041.1"/>
</dbReference>
<dbReference type="SMR" id="D5BCE4"/>
<dbReference type="STRING" id="655815.ZPR_4469"/>
<dbReference type="KEGG" id="zpr:ZPR_4469"/>
<dbReference type="eggNOG" id="COG1646">
    <property type="taxonomic scope" value="Bacteria"/>
</dbReference>
<dbReference type="HOGENOM" id="CLU_068610_0_0_10"/>
<dbReference type="OrthoDB" id="9807235at2"/>
<dbReference type="Proteomes" id="UP000001654">
    <property type="component" value="Chromosome"/>
</dbReference>
<dbReference type="GO" id="GO:0005737">
    <property type="term" value="C:cytoplasm"/>
    <property type="evidence" value="ECO:0007669"/>
    <property type="project" value="InterPro"/>
</dbReference>
<dbReference type="GO" id="GO:0000287">
    <property type="term" value="F:magnesium ion binding"/>
    <property type="evidence" value="ECO:0007669"/>
    <property type="project" value="UniProtKB-UniRule"/>
</dbReference>
<dbReference type="GO" id="GO:0047294">
    <property type="term" value="F:phosphoglycerol geranylgeranyltransferase activity"/>
    <property type="evidence" value="ECO:0007669"/>
    <property type="project" value="UniProtKB-UniRule"/>
</dbReference>
<dbReference type="GO" id="GO:0046474">
    <property type="term" value="P:glycerophospholipid biosynthetic process"/>
    <property type="evidence" value="ECO:0007669"/>
    <property type="project" value="UniProtKB-UniRule"/>
</dbReference>
<dbReference type="Gene3D" id="3.20.20.390">
    <property type="entry name" value="FMN-linked oxidoreductases"/>
    <property type="match status" value="1"/>
</dbReference>
<dbReference type="HAMAP" id="MF_00112">
    <property type="entry name" value="GGGP_HepGP_synthase"/>
    <property type="match status" value="1"/>
</dbReference>
<dbReference type="InterPro" id="IPR039074">
    <property type="entry name" value="GGGP/HepGP_synthase_I"/>
</dbReference>
<dbReference type="InterPro" id="IPR038597">
    <property type="entry name" value="GGGP/HepGP_synthase_sf"/>
</dbReference>
<dbReference type="InterPro" id="IPR008205">
    <property type="entry name" value="GGGP_HepGP_synthase"/>
</dbReference>
<dbReference type="InterPro" id="IPR010946">
    <property type="entry name" value="GGGP_synth"/>
</dbReference>
<dbReference type="NCBIfam" id="TIGR01769">
    <property type="entry name" value="GGGP"/>
    <property type="match status" value="1"/>
</dbReference>
<dbReference type="NCBIfam" id="TIGR01768">
    <property type="entry name" value="GGGP-family"/>
    <property type="match status" value="1"/>
</dbReference>
<dbReference type="NCBIfam" id="NF003198">
    <property type="entry name" value="PRK04169.1-2"/>
    <property type="match status" value="1"/>
</dbReference>
<dbReference type="PANTHER" id="PTHR40029">
    <property type="match status" value="1"/>
</dbReference>
<dbReference type="PANTHER" id="PTHR40029:SF2">
    <property type="entry name" value="HEPTAPRENYLGLYCERYL PHOSPHATE SYNTHASE"/>
    <property type="match status" value="1"/>
</dbReference>
<dbReference type="Pfam" id="PF01884">
    <property type="entry name" value="PcrB"/>
    <property type="match status" value="1"/>
</dbReference>
<dbReference type="SUPFAM" id="SSF51395">
    <property type="entry name" value="FMN-linked oxidoreductases"/>
    <property type="match status" value="1"/>
</dbReference>
<gene>
    <name evidence="3" type="ordered locus">ZPR_4469</name>
</gene>
<proteinExistence type="evidence at protein level"/>